<accession>P51249</accession>
<organism>
    <name type="scientific">Porphyra purpurea</name>
    <name type="common">Red seaweed</name>
    <name type="synonym">Ulva purpurea</name>
    <dbReference type="NCBI Taxonomy" id="2787"/>
    <lineage>
        <taxon>Eukaryota</taxon>
        <taxon>Rhodophyta</taxon>
        <taxon>Bangiophyceae</taxon>
        <taxon>Bangiales</taxon>
        <taxon>Bangiaceae</taxon>
        <taxon>Porphyra</taxon>
    </lineage>
</organism>
<comment type="subcellular location">
    <subcellularLocation>
        <location>Plastid</location>
        <location>Chloroplast</location>
    </subcellularLocation>
</comment>
<comment type="similarity">
    <text evidence="1">Belongs to the universal ribosomal protein uS2 family.</text>
</comment>
<reference key="1">
    <citation type="journal article" date="1995" name="Plant Mol. Biol. Rep.">
        <title>Complete nucleotide sequence of the Porphyra purpurea chloroplast genome.</title>
        <authorList>
            <person name="Reith M.E."/>
            <person name="Munholland J."/>
        </authorList>
    </citation>
    <scope>NUCLEOTIDE SEQUENCE [LARGE SCALE GENOMIC DNA]</scope>
    <source>
        <strain>Avonport</strain>
    </source>
</reference>
<dbReference type="EMBL" id="U38804">
    <property type="protein sequence ID" value="AAC08135.1"/>
    <property type="molecule type" value="Genomic_DNA"/>
</dbReference>
<dbReference type="PIR" id="S73170">
    <property type="entry name" value="S73170"/>
</dbReference>
<dbReference type="RefSeq" id="NP_053859.1">
    <property type="nucleotide sequence ID" value="NC_000925.1"/>
</dbReference>
<dbReference type="SMR" id="P51249"/>
<dbReference type="GeneID" id="809878"/>
<dbReference type="GO" id="GO:0009507">
    <property type="term" value="C:chloroplast"/>
    <property type="evidence" value="ECO:0007669"/>
    <property type="project" value="UniProtKB-SubCell"/>
</dbReference>
<dbReference type="GO" id="GO:0015935">
    <property type="term" value="C:small ribosomal subunit"/>
    <property type="evidence" value="ECO:0007669"/>
    <property type="project" value="InterPro"/>
</dbReference>
<dbReference type="GO" id="GO:0003735">
    <property type="term" value="F:structural constituent of ribosome"/>
    <property type="evidence" value="ECO:0007669"/>
    <property type="project" value="InterPro"/>
</dbReference>
<dbReference type="GO" id="GO:0006412">
    <property type="term" value="P:translation"/>
    <property type="evidence" value="ECO:0007669"/>
    <property type="project" value="UniProtKB-UniRule"/>
</dbReference>
<dbReference type="CDD" id="cd01425">
    <property type="entry name" value="RPS2"/>
    <property type="match status" value="1"/>
</dbReference>
<dbReference type="FunFam" id="1.10.287.610:FF:000001">
    <property type="entry name" value="30S ribosomal protein S2"/>
    <property type="match status" value="1"/>
</dbReference>
<dbReference type="Gene3D" id="3.40.50.10490">
    <property type="entry name" value="Glucose-6-phosphate isomerase like protein, domain 1"/>
    <property type="match status" value="1"/>
</dbReference>
<dbReference type="Gene3D" id="1.10.287.610">
    <property type="entry name" value="Helix hairpin bin"/>
    <property type="match status" value="1"/>
</dbReference>
<dbReference type="HAMAP" id="MF_00291_B">
    <property type="entry name" value="Ribosomal_uS2_B"/>
    <property type="match status" value="1"/>
</dbReference>
<dbReference type="InterPro" id="IPR001865">
    <property type="entry name" value="Ribosomal_uS2"/>
</dbReference>
<dbReference type="InterPro" id="IPR005706">
    <property type="entry name" value="Ribosomal_uS2_bac/mit/plastid"/>
</dbReference>
<dbReference type="InterPro" id="IPR018130">
    <property type="entry name" value="Ribosomal_uS2_CS"/>
</dbReference>
<dbReference type="InterPro" id="IPR023591">
    <property type="entry name" value="Ribosomal_uS2_flav_dom_sf"/>
</dbReference>
<dbReference type="NCBIfam" id="TIGR01011">
    <property type="entry name" value="rpsB_bact"/>
    <property type="match status" value="1"/>
</dbReference>
<dbReference type="PANTHER" id="PTHR12534">
    <property type="entry name" value="30S RIBOSOMAL PROTEIN S2 PROKARYOTIC AND ORGANELLAR"/>
    <property type="match status" value="1"/>
</dbReference>
<dbReference type="PANTHER" id="PTHR12534:SF0">
    <property type="entry name" value="SMALL RIBOSOMAL SUBUNIT PROTEIN US2M"/>
    <property type="match status" value="1"/>
</dbReference>
<dbReference type="Pfam" id="PF00318">
    <property type="entry name" value="Ribosomal_S2"/>
    <property type="match status" value="1"/>
</dbReference>
<dbReference type="PRINTS" id="PR00395">
    <property type="entry name" value="RIBOSOMALS2"/>
</dbReference>
<dbReference type="SUPFAM" id="SSF52313">
    <property type="entry name" value="Ribosomal protein S2"/>
    <property type="match status" value="1"/>
</dbReference>
<dbReference type="PROSITE" id="PS00962">
    <property type="entry name" value="RIBOSOMAL_S2_1"/>
    <property type="match status" value="1"/>
</dbReference>
<dbReference type="PROSITE" id="PS00963">
    <property type="entry name" value="RIBOSOMAL_S2_2"/>
    <property type="match status" value="1"/>
</dbReference>
<sequence>MAIVTLAELLEAGVHFGHQARRWNPKMFPYIYTERNGIHIIDLVQTSQLLTEACEFVKQASSDGRKVLFLGTKRQAAGIIAQEAQRCDSYYVNQRWLGGMLTNWVTIKSRVTRLRQLEEQDSSGLIDQLPKKEAAVLRRELDKLRKHLNGIKNMTRLPDIVVVVDQKRETTAIQECLKLGIPTICILDTNCSPEIINIPIPANDDAIRSIKLIIGKIADAIYEGKYGQMEPTELISSAEDK</sequence>
<protein>
    <recommendedName>
        <fullName evidence="1">Small ribosomal subunit protein uS2c</fullName>
    </recommendedName>
    <alternativeName>
        <fullName>30S ribosomal protein S2, chloroplastic</fullName>
    </alternativeName>
</protein>
<evidence type="ECO:0000305" key="1"/>
<keyword id="KW-0150">Chloroplast</keyword>
<keyword id="KW-0934">Plastid</keyword>
<keyword id="KW-0687">Ribonucleoprotein</keyword>
<keyword id="KW-0689">Ribosomal protein</keyword>
<gene>
    <name type="primary">rps2</name>
</gene>
<geneLocation type="chloroplast"/>
<feature type="chain" id="PRO_0000134311" description="Small ribosomal subunit protein uS2c">
    <location>
        <begin position="1"/>
        <end position="241"/>
    </location>
</feature>
<name>RR2_PORPU</name>
<proteinExistence type="inferred from homology"/>